<comment type="function">
    <text evidence="1">Quinone reductase that provides resistance to thiol-specific stress caused by electrophilic quinones.</text>
</comment>
<comment type="function">
    <text evidence="1">Also exhibits azoreductase activity. Catalyzes the reductive cleavage of the azo bond in aromatic azo compounds to the corresponding amines.</text>
</comment>
<comment type="catalytic activity">
    <reaction evidence="1">
        <text>2 a quinone + NADH + H(+) = 2 a 1,4-benzosemiquinone + NAD(+)</text>
        <dbReference type="Rhea" id="RHEA:65952"/>
        <dbReference type="ChEBI" id="CHEBI:15378"/>
        <dbReference type="ChEBI" id="CHEBI:57540"/>
        <dbReference type="ChEBI" id="CHEBI:57945"/>
        <dbReference type="ChEBI" id="CHEBI:132124"/>
        <dbReference type="ChEBI" id="CHEBI:134225"/>
    </reaction>
</comment>
<comment type="catalytic activity">
    <reaction evidence="1">
        <text>N,N-dimethyl-1,4-phenylenediamine + anthranilate + 2 NAD(+) = 2-(4-dimethylaminophenyl)diazenylbenzoate + 2 NADH + 2 H(+)</text>
        <dbReference type="Rhea" id="RHEA:55872"/>
        <dbReference type="ChEBI" id="CHEBI:15378"/>
        <dbReference type="ChEBI" id="CHEBI:15783"/>
        <dbReference type="ChEBI" id="CHEBI:16567"/>
        <dbReference type="ChEBI" id="CHEBI:57540"/>
        <dbReference type="ChEBI" id="CHEBI:57945"/>
        <dbReference type="ChEBI" id="CHEBI:71579"/>
        <dbReference type="EC" id="1.7.1.17"/>
    </reaction>
</comment>
<comment type="cofactor">
    <cofactor evidence="1">
        <name>FMN</name>
        <dbReference type="ChEBI" id="CHEBI:58210"/>
    </cofactor>
    <text evidence="1">Binds 1 FMN per subunit.</text>
</comment>
<comment type="subunit">
    <text evidence="1">Homodimer.</text>
</comment>
<comment type="similarity">
    <text evidence="1">Belongs to the azoreductase type 1 family.</text>
</comment>
<proteinExistence type="inferred from homology"/>
<sequence>MSKVLFINASPVANEASFSYQLAKTFESEYLKLNPSDQVSWLDLNELDKGSMTLTSKNSKEHFKDENVDPLINQIKSVDKLVVIAPMTNFNYPATLKNWLDKICVANKTFSYKYSKKGGSIGLMDHLKVMIINTQGAPEGWYAFADVTVLLKGVFEFIGAMVDSIKVAGTKVEYLNKQPKEIVEPNLALIKEKAKNF</sequence>
<gene>
    <name evidence="1" type="primary">azoR</name>
    <name type="ordered locus">MYCGA5240</name>
    <name type="ORF">MGA_0243</name>
</gene>
<reference key="1">
    <citation type="journal article" date="2003" name="Microbiology">
        <title>The complete genome sequence of the avian pathogen Mycoplasma gallisepticum strain R(low).</title>
        <authorList>
            <person name="Papazisi L."/>
            <person name="Gorton T.S."/>
            <person name="Kutish G."/>
            <person name="Markham P.F."/>
            <person name="Browning G.F."/>
            <person name="Nguyen D.K."/>
            <person name="Swartzell S."/>
            <person name="Madan A."/>
            <person name="Mahairas G."/>
            <person name="Geary S.J."/>
        </authorList>
    </citation>
    <scope>NUCLEOTIDE SEQUENCE [LARGE SCALE GENOMIC DNA]</scope>
    <source>
        <strain>R(low / passage 15 / clone 2)</strain>
    </source>
</reference>
<feature type="chain" id="PRO_0000245932" description="FMN-dependent NADH:quinone oxidoreductase">
    <location>
        <begin position="1"/>
        <end position="197"/>
    </location>
</feature>
<feature type="binding site" evidence="1">
    <location>
        <position position="10"/>
    </location>
    <ligand>
        <name>FMN</name>
        <dbReference type="ChEBI" id="CHEBI:58210"/>
    </ligand>
</feature>
<feature type="binding site" evidence="1">
    <location>
        <begin position="17"/>
        <end position="19"/>
    </location>
    <ligand>
        <name>FMN</name>
        <dbReference type="ChEBI" id="CHEBI:58210"/>
    </ligand>
</feature>
<protein>
    <recommendedName>
        <fullName evidence="1">FMN-dependent NADH:quinone oxidoreductase</fullName>
        <ecNumber evidence="1">1.6.5.-</ecNumber>
    </recommendedName>
    <alternativeName>
        <fullName evidence="1">Azo-dye reductase</fullName>
    </alternativeName>
    <alternativeName>
        <fullName evidence="1">FMN-dependent NADH-azo compound oxidoreductase</fullName>
    </alternativeName>
    <alternativeName>
        <fullName evidence="1">FMN-dependent NADH-azoreductase</fullName>
        <ecNumber evidence="1">1.7.1.17</ecNumber>
    </alternativeName>
</protein>
<dbReference type="EC" id="1.6.5.-" evidence="1"/>
<dbReference type="EC" id="1.7.1.17" evidence="1"/>
<dbReference type="EMBL" id="AE015450">
    <property type="protein sequence ID" value="AAP56874.2"/>
    <property type="molecule type" value="Genomic_DNA"/>
</dbReference>
<dbReference type="RefSeq" id="WP_011113776.1">
    <property type="nucleotide sequence ID" value="NC_004829.2"/>
</dbReference>
<dbReference type="SMR" id="Q7NAW1"/>
<dbReference type="KEGG" id="mga:MGA_0243"/>
<dbReference type="PATRIC" id="fig|233150.7.peg.588"/>
<dbReference type="HOGENOM" id="CLU_088964_2_0_14"/>
<dbReference type="OrthoDB" id="9805013at2"/>
<dbReference type="Proteomes" id="UP000001418">
    <property type="component" value="Chromosome"/>
</dbReference>
<dbReference type="GO" id="GO:0009055">
    <property type="term" value="F:electron transfer activity"/>
    <property type="evidence" value="ECO:0007669"/>
    <property type="project" value="UniProtKB-UniRule"/>
</dbReference>
<dbReference type="GO" id="GO:0010181">
    <property type="term" value="F:FMN binding"/>
    <property type="evidence" value="ECO:0007669"/>
    <property type="project" value="UniProtKB-UniRule"/>
</dbReference>
<dbReference type="GO" id="GO:0016652">
    <property type="term" value="F:oxidoreductase activity, acting on NAD(P)H as acceptor"/>
    <property type="evidence" value="ECO:0007669"/>
    <property type="project" value="UniProtKB-UniRule"/>
</dbReference>
<dbReference type="GO" id="GO:0016655">
    <property type="term" value="F:oxidoreductase activity, acting on NAD(P)H, quinone or similar compound as acceptor"/>
    <property type="evidence" value="ECO:0007669"/>
    <property type="project" value="InterPro"/>
</dbReference>
<dbReference type="Gene3D" id="3.40.50.360">
    <property type="match status" value="1"/>
</dbReference>
<dbReference type="HAMAP" id="MF_01216">
    <property type="entry name" value="Azoreductase_type1"/>
    <property type="match status" value="1"/>
</dbReference>
<dbReference type="InterPro" id="IPR003680">
    <property type="entry name" value="Flavodoxin_fold"/>
</dbReference>
<dbReference type="InterPro" id="IPR029039">
    <property type="entry name" value="Flavoprotein-like_sf"/>
</dbReference>
<dbReference type="InterPro" id="IPR050104">
    <property type="entry name" value="FMN-dep_NADH:Q_OxRdtase_AzoR1"/>
</dbReference>
<dbReference type="InterPro" id="IPR023048">
    <property type="entry name" value="NADH:quinone_OxRdtase_FMN_depd"/>
</dbReference>
<dbReference type="NCBIfam" id="NF002370">
    <property type="entry name" value="PRK01355.1"/>
    <property type="match status" value="1"/>
</dbReference>
<dbReference type="PANTHER" id="PTHR43741">
    <property type="entry name" value="FMN-DEPENDENT NADH-AZOREDUCTASE 1"/>
    <property type="match status" value="1"/>
</dbReference>
<dbReference type="PANTHER" id="PTHR43741:SF4">
    <property type="entry name" value="FMN-DEPENDENT NADH:QUINONE OXIDOREDUCTASE"/>
    <property type="match status" value="1"/>
</dbReference>
<dbReference type="Pfam" id="PF02525">
    <property type="entry name" value="Flavodoxin_2"/>
    <property type="match status" value="1"/>
</dbReference>
<dbReference type="SUPFAM" id="SSF52218">
    <property type="entry name" value="Flavoproteins"/>
    <property type="match status" value="1"/>
</dbReference>
<name>AZOR_MYCGA</name>
<organism>
    <name type="scientific">Mycoplasmoides gallisepticum (strain R(low / passage 15 / clone 2))</name>
    <name type="common">Mycoplasma gallisepticum</name>
    <dbReference type="NCBI Taxonomy" id="710127"/>
    <lineage>
        <taxon>Bacteria</taxon>
        <taxon>Bacillati</taxon>
        <taxon>Mycoplasmatota</taxon>
        <taxon>Mycoplasmoidales</taxon>
        <taxon>Mycoplasmoidaceae</taxon>
        <taxon>Mycoplasmoides</taxon>
    </lineage>
</organism>
<keyword id="KW-0285">Flavoprotein</keyword>
<keyword id="KW-0288">FMN</keyword>
<keyword id="KW-0520">NAD</keyword>
<keyword id="KW-0560">Oxidoreductase</keyword>
<keyword id="KW-1185">Reference proteome</keyword>
<accession>Q7NAW1</accession>
<evidence type="ECO:0000255" key="1">
    <source>
        <dbReference type="HAMAP-Rule" id="MF_01216"/>
    </source>
</evidence>